<comment type="function">
    <text evidence="2">Component of the trimeric PUCH (precursor of 21U RNA 5'-end cleavage holoenzyme) complex, that acts as an endoribonuclease processing the 5'-end of precursor Piwi-interacting RNAs (piRNAs) (PubMed:37758951). The PUCH complex consists of tofu-1, tofu-2 and either slfl-3 or slfl-4, where tofu-2 exhibits endoribonuclease activity (PubMed:37758951). PUCH-mediated processing strictly requires a 7-methyl-G cap (m7 G-cap) and an uracil at position three (U3) (PubMed:37758951). PUCH also exhibits a strict bias for piRNA precursors with an A or G at position 1 (PubMed:37758951). Mature piRNA production is enhanced by the interaction of PUCH with the PETISCO complex, which is stabilizing piRNA precursors and allows their processing by PUCH (PubMed:37758951).</text>
</comment>
<comment type="subunit">
    <text evidence="2">Component of the PUCH (precursor of 21U RNA 5'-end cleavage holoenzyme) complex; consisting of tofu-1, tofu-2 and either slfl-3 or slfl-4 (PubMed:37758951). Within the complex, interacts (via N-terminus) with tofu-2 (via N-terminus); the presence of tofu-1 is required for the interaction (PubMed:37758951).</text>
</comment>
<comment type="subcellular location">
    <subcellularLocation>
        <location evidence="2">Mitochondrion membrane</location>
        <topology evidence="1">Single-pass membrane protein</topology>
    </subcellularLocation>
    <text evidence="2">The localization to the mitochondrion is mediated by the transmembrane domain.</text>
</comment>
<comment type="domain">
    <text evidence="2">The transmembrane domain is mediating the localization to mitochondria. The proximity to mitochondria plays an important role in piRNA production.</text>
</comment>
<comment type="disruption phenotype">
    <text evidence="2">Triggers mild activation of the piRNA sensor, this activation is lost in later generations (PubMed:37758951). In a slfl-4 mutant background, almost complete loss of mature piRNAs and piRNA precursor accumulation (PubMed:37758951).</text>
</comment>
<comment type="similarity">
    <text evidence="4">Belongs to the Schlafen family.</text>
</comment>
<evidence type="ECO:0000255" key="1"/>
<evidence type="ECO:0000269" key="2">
    <source>
    </source>
</evidence>
<evidence type="ECO:0000303" key="3">
    <source>
    </source>
</evidence>
<evidence type="ECO:0000305" key="4"/>
<evidence type="ECO:0000312" key="5">
    <source>
        <dbReference type="Proteomes" id="UP000001940"/>
    </source>
</evidence>
<evidence type="ECO:0000312" key="6">
    <source>
        <dbReference type="WormBase" id="C35E7.8"/>
    </source>
</evidence>
<feature type="chain" id="PRO_0000459692" description="Schlafen-like protein 3">
    <location>
        <begin position="1"/>
        <end position="383"/>
    </location>
</feature>
<feature type="transmembrane region" description="Helical" evidence="1">
    <location>
        <begin position="354"/>
        <end position="374"/>
    </location>
</feature>
<feature type="region of interest" description="SLFN-like fold" evidence="3">
    <location>
        <begin position="118"/>
        <end position="266"/>
    </location>
</feature>
<accession>O61766</accession>
<sequence>MDSGDFSPMQSNFSLGFMSFEDIPEDARTTEMIDKIVFEEDKEYDHTQDSFRYGRVTTGVSYNLVTGKIPKTVFEQVKAKDDENDNVEFEMEHLEDKETAHKTQTFDELYESQMPKYFDYQSNFSDVNGIWTLLFDQNHYEKMSTFELQAAICAALNSKHFMMICVGIDAFNAVTGVEMSAKDRVVFRMALTRAVAGEFQPPLVKVAPKQLTGVSPMKRDISEVTSSIDVLFVPVIGVTDEVENNRFLIVVRVKEISDKVYQISSGRIYNEQEGRVVEMSDMNEAFHKLIVEKSISDIQTRRGSMFMLEPEPFLEDSAVIFTESNEIPSENHEISRVHVKNCTERSLSQSLLNLLDIQNIGWIFFGTALSFCIYNNAIKPLVK</sequence>
<dbReference type="EMBL" id="BX284601">
    <property type="protein sequence ID" value="CCD66819.1"/>
    <property type="molecule type" value="Genomic_DNA"/>
</dbReference>
<dbReference type="RefSeq" id="NP_492825.3">
    <property type="nucleotide sequence ID" value="NM_060424.7"/>
</dbReference>
<dbReference type="ComplexPortal" id="CPX-8565">
    <property type="entry name" value="PUCH ribonuclease complex, slfl-3 variant"/>
</dbReference>
<dbReference type="DIP" id="DIP-26434N"/>
<dbReference type="FunCoup" id="O61766">
    <property type="interactions" value="1425"/>
</dbReference>
<dbReference type="PaxDb" id="6239-C35E7.8"/>
<dbReference type="EnsemblMetazoa" id="C35E7.8.1">
    <property type="protein sequence ID" value="C35E7.8.1"/>
    <property type="gene ID" value="WBGene00016460"/>
</dbReference>
<dbReference type="GeneID" id="183245"/>
<dbReference type="KEGG" id="cel:CELE_C35E7.8"/>
<dbReference type="UCSC" id="C35E7.8">
    <property type="organism name" value="c. elegans"/>
</dbReference>
<dbReference type="AGR" id="WB:WBGene00016460"/>
<dbReference type="CTD" id="183245"/>
<dbReference type="WormBase" id="C35E7.8">
    <property type="protein sequence ID" value="CE44124"/>
    <property type="gene ID" value="WBGene00016460"/>
    <property type="gene designation" value="slfl-3"/>
</dbReference>
<dbReference type="eggNOG" id="ENOG502TH52">
    <property type="taxonomic scope" value="Eukaryota"/>
</dbReference>
<dbReference type="GeneTree" id="ENSGT00970000196292"/>
<dbReference type="HOGENOM" id="CLU_673072_0_0_1"/>
<dbReference type="InParanoid" id="O61766"/>
<dbReference type="OMA" id="IPSENHE"/>
<dbReference type="OrthoDB" id="5799141at2759"/>
<dbReference type="Proteomes" id="UP000001940">
    <property type="component" value="Chromosome I"/>
</dbReference>
<dbReference type="Bgee" id="WBGene00016460">
    <property type="expression patterns" value="Expressed in germ line (C elegans) and 3 other cell types or tissues"/>
</dbReference>
<dbReference type="GO" id="GO:0005783">
    <property type="term" value="C:endoplasmic reticulum"/>
    <property type="evidence" value="ECO:0007005"/>
    <property type="project" value="WormBase"/>
</dbReference>
<dbReference type="GO" id="GO:1902555">
    <property type="term" value="C:endoribonuclease complex"/>
    <property type="evidence" value="ECO:0000314"/>
    <property type="project" value="UniProtKB"/>
</dbReference>
<dbReference type="GO" id="GO:0031966">
    <property type="term" value="C:mitochondrial membrane"/>
    <property type="evidence" value="ECO:0007669"/>
    <property type="project" value="UniProtKB-SubCell"/>
</dbReference>
<dbReference type="GO" id="GO:0005739">
    <property type="term" value="C:mitochondrion"/>
    <property type="evidence" value="ECO:0000314"/>
    <property type="project" value="UniProtKB"/>
</dbReference>
<dbReference type="GO" id="GO:0140990">
    <property type="term" value="P:primary piRNA processing"/>
    <property type="evidence" value="ECO:0000314"/>
    <property type="project" value="UniProtKB"/>
</dbReference>
<organism evidence="5">
    <name type="scientific">Caenorhabditis elegans</name>
    <dbReference type="NCBI Taxonomy" id="6239"/>
    <lineage>
        <taxon>Eukaryota</taxon>
        <taxon>Metazoa</taxon>
        <taxon>Ecdysozoa</taxon>
        <taxon>Nematoda</taxon>
        <taxon>Chromadorea</taxon>
        <taxon>Rhabditida</taxon>
        <taxon>Rhabditina</taxon>
        <taxon>Rhabditomorpha</taxon>
        <taxon>Rhabditoidea</taxon>
        <taxon>Rhabditidae</taxon>
        <taxon>Peloderinae</taxon>
        <taxon>Caenorhabditis</taxon>
    </lineage>
</organism>
<gene>
    <name evidence="6" type="primary">slfl-3</name>
    <name evidence="6" type="ORF">C35E7.8</name>
</gene>
<proteinExistence type="evidence at protein level"/>
<keyword id="KW-0472">Membrane</keyword>
<keyword id="KW-0496">Mitochondrion</keyword>
<keyword id="KW-1185">Reference proteome</keyword>
<keyword id="KW-0812">Transmembrane</keyword>
<keyword id="KW-1133">Transmembrane helix</keyword>
<protein>
    <recommendedName>
        <fullName evidence="3">Schlafen-like protein 3</fullName>
        <shortName evidence="3">SLFN-like 3</shortName>
    </recommendedName>
    <alternativeName>
        <fullName evidence="4">PUCH complex member slfl-3</fullName>
    </alternativeName>
</protein>
<name>SLFL3_CAEEL</name>
<reference evidence="5" key="1">
    <citation type="journal article" date="1998" name="Science">
        <title>Genome sequence of the nematode C. elegans: a platform for investigating biology.</title>
        <authorList>
            <consortium name="The C. elegans sequencing consortium"/>
        </authorList>
    </citation>
    <scope>NUCLEOTIDE SEQUENCE [LARGE SCALE GENOMIC DNA]</scope>
    <source>
        <strain evidence="5">Bristol N2</strain>
    </source>
</reference>
<reference evidence="4" key="2">
    <citation type="journal article" date="2023" name="Nature">
        <title>piRNA processing by a trimeric Schlafen-domain nuclease.</title>
        <authorList>
            <person name="Podvalnaya N."/>
            <person name="Bronkhorst A.W."/>
            <person name="Lichtenberger R."/>
            <person name="Hellmann S."/>
            <person name="Nischwitz E."/>
            <person name="Falk T."/>
            <person name="Karaulanov E."/>
            <person name="Butter F."/>
            <person name="Falk S."/>
            <person name="Ketting R.F."/>
        </authorList>
    </citation>
    <scope>FUNCTION</scope>
    <scope>IDENTIFICATION IN THE PUCH COMPLEX</scope>
    <scope>INTERACTION WITH TOFU-2</scope>
    <scope>SUBCELLULAR LOCATION</scope>
    <scope>DOMAIN</scope>
    <scope>DISRUPTION PHENOTYPE</scope>
    <scope>IDENTIFICATION BY MASS SPECTROMETRY</scope>
</reference>